<protein>
    <recommendedName>
        <fullName evidence="1">DNA-directed RNA polymerase subunit omega</fullName>
        <shortName evidence="1">RNAP omega subunit</shortName>
        <ecNumber evidence="1">2.7.7.6</ecNumber>
    </recommendedName>
    <alternativeName>
        <fullName evidence="1">RNA polymerase omega subunit</fullName>
    </alternativeName>
    <alternativeName>
        <fullName evidence="1">Transcriptase subunit omega</fullName>
    </alternativeName>
</protein>
<keyword id="KW-0240">DNA-directed RNA polymerase</keyword>
<keyword id="KW-0548">Nucleotidyltransferase</keyword>
<keyword id="KW-1185">Reference proteome</keyword>
<keyword id="KW-0804">Transcription</keyword>
<keyword id="KW-0808">Transferase</keyword>
<comment type="function">
    <text evidence="1">Promotes RNA polymerase assembly. Latches the N- and C-terminal regions of the beta' subunit thereby facilitating its interaction with the beta and alpha subunits.</text>
</comment>
<comment type="catalytic activity">
    <reaction evidence="1">
        <text>RNA(n) + a ribonucleoside 5'-triphosphate = RNA(n+1) + diphosphate</text>
        <dbReference type="Rhea" id="RHEA:21248"/>
        <dbReference type="Rhea" id="RHEA-COMP:14527"/>
        <dbReference type="Rhea" id="RHEA-COMP:17342"/>
        <dbReference type="ChEBI" id="CHEBI:33019"/>
        <dbReference type="ChEBI" id="CHEBI:61557"/>
        <dbReference type="ChEBI" id="CHEBI:140395"/>
        <dbReference type="EC" id="2.7.7.6"/>
    </reaction>
</comment>
<comment type="subunit">
    <text evidence="1">The RNAP catalytic core consists of 2 alpha, 1 beta, 1 beta' and 1 omega subunit. When a sigma factor is associated with the core the holoenzyme is formed, which can initiate transcription.</text>
</comment>
<comment type="similarity">
    <text evidence="1">Belongs to the RNA polymerase subunit omega family.</text>
</comment>
<accession>A1AHI0</accession>
<proteinExistence type="inferred from homology"/>
<feature type="chain" id="PRO_1000005922" description="DNA-directed RNA polymerase subunit omega">
    <location>
        <begin position="1"/>
        <end position="91"/>
    </location>
</feature>
<organism>
    <name type="scientific">Escherichia coli O1:K1 / APEC</name>
    <dbReference type="NCBI Taxonomy" id="405955"/>
    <lineage>
        <taxon>Bacteria</taxon>
        <taxon>Pseudomonadati</taxon>
        <taxon>Pseudomonadota</taxon>
        <taxon>Gammaproteobacteria</taxon>
        <taxon>Enterobacterales</taxon>
        <taxon>Enterobacteriaceae</taxon>
        <taxon>Escherichia</taxon>
    </lineage>
</organism>
<name>RPOZ_ECOK1</name>
<gene>
    <name evidence="1" type="primary">rpoZ</name>
    <name type="ordered locus">Ecok1_36260</name>
    <name type="ORF">APECO1_2812</name>
</gene>
<evidence type="ECO:0000255" key="1">
    <source>
        <dbReference type="HAMAP-Rule" id="MF_00366"/>
    </source>
</evidence>
<sequence length="91" mass="10237">MARVTVQDAVEKIGNRFDLVLVAARRARQMQVGGKDPLVPEENDKTTVIALREIEEGLINNQILDVRERQEQQEQEAAELQAVTAIAEGRR</sequence>
<dbReference type="EC" id="2.7.7.6" evidence="1"/>
<dbReference type="EMBL" id="CP000468">
    <property type="protein sequence ID" value="ABJ03120.1"/>
    <property type="molecule type" value="Genomic_DNA"/>
</dbReference>
<dbReference type="RefSeq" id="WP_000135058.1">
    <property type="nucleotide sequence ID" value="NZ_CADILS010000011.1"/>
</dbReference>
<dbReference type="EMDB" id="EMD-28845"/>
<dbReference type="EMDB" id="EMD-29732"/>
<dbReference type="EMDB" id="EMD-47120"/>
<dbReference type="SMR" id="A1AHI0"/>
<dbReference type="GeneID" id="98390719"/>
<dbReference type="KEGG" id="ecv:APECO1_2812"/>
<dbReference type="HOGENOM" id="CLU_125406_5_3_6"/>
<dbReference type="Proteomes" id="UP000008216">
    <property type="component" value="Chromosome"/>
</dbReference>
<dbReference type="GO" id="GO:0000428">
    <property type="term" value="C:DNA-directed RNA polymerase complex"/>
    <property type="evidence" value="ECO:0007669"/>
    <property type="project" value="UniProtKB-KW"/>
</dbReference>
<dbReference type="GO" id="GO:0003677">
    <property type="term" value="F:DNA binding"/>
    <property type="evidence" value="ECO:0007669"/>
    <property type="project" value="UniProtKB-UniRule"/>
</dbReference>
<dbReference type="GO" id="GO:0003899">
    <property type="term" value="F:DNA-directed RNA polymerase activity"/>
    <property type="evidence" value="ECO:0007669"/>
    <property type="project" value="UniProtKB-UniRule"/>
</dbReference>
<dbReference type="GO" id="GO:0006351">
    <property type="term" value="P:DNA-templated transcription"/>
    <property type="evidence" value="ECO:0007669"/>
    <property type="project" value="UniProtKB-UniRule"/>
</dbReference>
<dbReference type="FunFam" id="3.90.940.10:FF:000001">
    <property type="entry name" value="DNA-directed RNA polymerase subunit omega"/>
    <property type="match status" value="1"/>
</dbReference>
<dbReference type="Gene3D" id="3.90.940.10">
    <property type="match status" value="1"/>
</dbReference>
<dbReference type="HAMAP" id="MF_00366">
    <property type="entry name" value="RNApol_bact_RpoZ"/>
    <property type="match status" value="1"/>
</dbReference>
<dbReference type="InterPro" id="IPR003716">
    <property type="entry name" value="DNA-dir_RNA_pol_omega"/>
</dbReference>
<dbReference type="InterPro" id="IPR006110">
    <property type="entry name" value="Pol_omega/Rpo6/RPB6"/>
</dbReference>
<dbReference type="InterPro" id="IPR036161">
    <property type="entry name" value="RPB6/omega-like_sf"/>
</dbReference>
<dbReference type="NCBIfam" id="TIGR00690">
    <property type="entry name" value="rpoZ"/>
    <property type="match status" value="1"/>
</dbReference>
<dbReference type="PANTHER" id="PTHR34476">
    <property type="entry name" value="DNA-DIRECTED RNA POLYMERASE SUBUNIT OMEGA"/>
    <property type="match status" value="1"/>
</dbReference>
<dbReference type="PANTHER" id="PTHR34476:SF1">
    <property type="entry name" value="DNA-DIRECTED RNA POLYMERASE SUBUNIT OMEGA"/>
    <property type="match status" value="1"/>
</dbReference>
<dbReference type="Pfam" id="PF01192">
    <property type="entry name" value="RNA_pol_Rpb6"/>
    <property type="match status" value="1"/>
</dbReference>
<dbReference type="SMART" id="SM01409">
    <property type="entry name" value="RNA_pol_Rpb6"/>
    <property type="match status" value="1"/>
</dbReference>
<dbReference type="SUPFAM" id="SSF63562">
    <property type="entry name" value="RPB6/omega subunit-like"/>
    <property type="match status" value="1"/>
</dbReference>
<reference key="1">
    <citation type="journal article" date="2007" name="J. Bacteriol.">
        <title>The genome sequence of avian pathogenic Escherichia coli strain O1:K1:H7 shares strong similarities with human extraintestinal pathogenic E. coli genomes.</title>
        <authorList>
            <person name="Johnson T.J."/>
            <person name="Kariyawasam S."/>
            <person name="Wannemuehler Y."/>
            <person name="Mangiamele P."/>
            <person name="Johnson S.J."/>
            <person name="Doetkott C."/>
            <person name="Skyberg J.A."/>
            <person name="Lynne A.M."/>
            <person name="Johnson J.R."/>
            <person name="Nolan L.K."/>
        </authorList>
    </citation>
    <scope>NUCLEOTIDE SEQUENCE [LARGE SCALE GENOMIC DNA]</scope>
</reference>